<gene>
    <name evidence="1" type="primary">atpG</name>
    <name type="ordered locus">KPK_5543</name>
</gene>
<comment type="function">
    <text evidence="1">Produces ATP from ADP in the presence of a proton gradient across the membrane. The gamma chain is believed to be important in regulating ATPase activity and the flow of protons through the CF(0) complex.</text>
</comment>
<comment type="subunit">
    <text evidence="1">F-type ATPases have 2 components, CF(1) - the catalytic core - and CF(0) - the membrane proton channel. CF(1) has five subunits: alpha(3), beta(3), gamma(1), delta(1), epsilon(1). CF(0) has three main subunits: a, b and c.</text>
</comment>
<comment type="subcellular location">
    <subcellularLocation>
        <location evidence="1">Cell inner membrane</location>
        <topology evidence="1">Peripheral membrane protein</topology>
    </subcellularLocation>
</comment>
<comment type="similarity">
    <text evidence="1">Belongs to the ATPase gamma chain family.</text>
</comment>
<accession>B5XZM3</accession>
<evidence type="ECO:0000255" key="1">
    <source>
        <dbReference type="HAMAP-Rule" id="MF_00815"/>
    </source>
</evidence>
<proteinExistence type="inferred from homology"/>
<sequence length="287" mass="31483">MAGAKEIRSKIASVQNTQKITKAMEMVAASKMRKSQERMAASRPYADTMRKVIGHLANGNLEYKHPYLEERDVKRVGYLVVSTDRGLCGGLNINLFKKLLAEMKAWSDKGVQCDLAMIGSKGVSFFNAVGGNVVAQVTGMGDNPSLSELIGPVKVMLQAYDEGRLDKLYVVSNKFINTMSQVPTITQLLPLPASEDADLKRKSWDYLYEPDPKALLDTLLRRYVESQVYQGVVENLASEQAARMVAMKAATDNGGSLIKELQLVYNKARQASITQELTEIVGGASAV</sequence>
<organism>
    <name type="scientific">Klebsiella pneumoniae (strain 342)</name>
    <dbReference type="NCBI Taxonomy" id="507522"/>
    <lineage>
        <taxon>Bacteria</taxon>
        <taxon>Pseudomonadati</taxon>
        <taxon>Pseudomonadota</taxon>
        <taxon>Gammaproteobacteria</taxon>
        <taxon>Enterobacterales</taxon>
        <taxon>Enterobacteriaceae</taxon>
        <taxon>Klebsiella/Raoultella group</taxon>
        <taxon>Klebsiella</taxon>
        <taxon>Klebsiella pneumoniae complex</taxon>
    </lineage>
</organism>
<protein>
    <recommendedName>
        <fullName evidence="1">ATP synthase gamma chain</fullName>
    </recommendedName>
    <alternativeName>
        <fullName evidence="1">ATP synthase F1 sector gamma subunit</fullName>
    </alternativeName>
    <alternativeName>
        <fullName evidence="1">F-ATPase gamma subunit</fullName>
    </alternativeName>
</protein>
<feature type="chain" id="PRO_1000134164" description="ATP synthase gamma chain">
    <location>
        <begin position="1"/>
        <end position="287"/>
    </location>
</feature>
<keyword id="KW-0066">ATP synthesis</keyword>
<keyword id="KW-0997">Cell inner membrane</keyword>
<keyword id="KW-1003">Cell membrane</keyword>
<keyword id="KW-0139">CF(1)</keyword>
<keyword id="KW-0375">Hydrogen ion transport</keyword>
<keyword id="KW-0406">Ion transport</keyword>
<keyword id="KW-0472">Membrane</keyword>
<keyword id="KW-0813">Transport</keyword>
<name>ATPG_KLEP3</name>
<dbReference type="EMBL" id="CP000964">
    <property type="protein sequence ID" value="ACI07887.1"/>
    <property type="molecule type" value="Genomic_DNA"/>
</dbReference>
<dbReference type="SMR" id="B5XZM3"/>
<dbReference type="KEGG" id="kpe:KPK_5543"/>
<dbReference type="HOGENOM" id="CLU_050669_0_1_6"/>
<dbReference type="Proteomes" id="UP000001734">
    <property type="component" value="Chromosome"/>
</dbReference>
<dbReference type="GO" id="GO:0005886">
    <property type="term" value="C:plasma membrane"/>
    <property type="evidence" value="ECO:0007669"/>
    <property type="project" value="UniProtKB-SubCell"/>
</dbReference>
<dbReference type="GO" id="GO:0045259">
    <property type="term" value="C:proton-transporting ATP synthase complex"/>
    <property type="evidence" value="ECO:0007669"/>
    <property type="project" value="UniProtKB-KW"/>
</dbReference>
<dbReference type="GO" id="GO:0005524">
    <property type="term" value="F:ATP binding"/>
    <property type="evidence" value="ECO:0007669"/>
    <property type="project" value="UniProtKB-UniRule"/>
</dbReference>
<dbReference type="GO" id="GO:0046933">
    <property type="term" value="F:proton-transporting ATP synthase activity, rotational mechanism"/>
    <property type="evidence" value="ECO:0007669"/>
    <property type="project" value="UniProtKB-UniRule"/>
</dbReference>
<dbReference type="GO" id="GO:0042777">
    <property type="term" value="P:proton motive force-driven plasma membrane ATP synthesis"/>
    <property type="evidence" value="ECO:0007669"/>
    <property type="project" value="UniProtKB-UniRule"/>
</dbReference>
<dbReference type="CDD" id="cd12151">
    <property type="entry name" value="F1-ATPase_gamma"/>
    <property type="match status" value="1"/>
</dbReference>
<dbReference type="FunFam" id="1.10.287.80:FF:000005">
    <property type="entry name" value="ATP synthase gamma chain"/>
    <property type="match status" value="2"/>
</dbReference>
<dbReference type="FunFam" id="3.40.1380.10:FF:000001">
    <property type="entry name" value="ATP synthase gamma chain"/>
    <property type="match status" value="1"/>
</dbReference>
<dbReference type="Gene3D" id="3.40.1380.10">
    <property type="match status" value="1"/>
</dbReference>
<dbReference type="Gene3D" id="1.10.287.80">
    <property type="entry name" value="ATP synthase, gamma subunit, helix hairpin domain"/>
    <property type="match status" value="1"/>
</dbReference>
<dbReference type="HAMAP" id="MF_00815">
    <property type="entry name" value="ATP_synth_gamma_bact"/>
    <property type="match status" value="1"/>
</dbReference>
<dbReference type="InterPro" id="IPR035968">
    <property type="entry name" value="ATP_synth_F1_ATPase_gsu"/>
</dbReference>
<dbReference type="InterPro" id="IPR000131">
    <property type="entry name" value="ATP_synth_F1_gsu"/>
</dbReference>
<dbReference type="InterPro" id="IPR023632">
    <property type="entry name" value="ATP_synth_F1_gsu_CS"/>
</dbReference>
<dbReference type="NCBIfam" id="TIGR01146">
    <property type="entry name" value="ATPsyn_F1gamma"/>
    <property type="match status" value="1"/>
</dbReference>
<dbReference type="NCBIfam" id="NF004144">
    <property type="entry name" value="PRK05621.1-1"/>
    <property type="match status" value="1"/>
</dbReference>
<dbReference type="PANTHER" id="PTHR11693">
    <property type="entry name" value="ATP SYNTHASE GAMMA CHAIN"/>
    <property type="match status" value="1"/>
</dbReference>
<dbReference type="PANTHER" id="PTHR11693:SF22">
    <property type="entry name" value="ATP SYNTHASE SUBUNIT GAMMA, MITOCHONDRIAL"/>
    <property type="match status" value="1"/>
</dbReference>
<dbReference type="Pfam" id="PF00231">
    <property type="entry name" value="ATP-synt"/>
    <property type="match status" value="1"/>
</dbReference>
<dbReference type="PRINTS" id="PR00126">
    <property type="entry name" value="ATPASEGAMMA"/>
</dbReference>
<dbReference type="SUPFAM" id="SSF52943">
    <property type="entry name" value="ATP synthase (F1-ATPase), gamma subunit"/>
    <property type="match status" value="1"/>
</dbReference>
<dbReference type="PROSITE" id="PS00153">
    <property type="entry name" value="ATPASE_GAMMA"/>
    <property type="match status" value="1"/>
</dbReference>
<reference key="1">
    <citation type="journal article" date="2008" name="PLoS Genet.">
        <title>Complete genome sequence of the N2-fixing broad host range endophyte Klebsiella pneumoniae 342 and virulence predictions verified in mice.</title>
        <authorList>
            <person name="Fouts D.E."/>
            <person name="Tyler H.L."/>
            <person name="DeBoy R.T."/>
            <person name="Daugherty S."/>
            <person name="Ren Q."/>
            <person name="Badger J.H."/>
            <person name="Durkin A.S."/>
            <person name="Huot H."/>
            <person name="Shrivastava S."/>
            <person name="Kothari S."/>
            <person name="Dodson R.J."/>
            <person name="Mohamoud Y."/>
            <person name="Khouri H."/>
            <person name="Roesch L.F.W."/>
            <person name="Krogfelt K.A."/>
            <person name="Struve C."/>
            <person name="Triplett E.W."/>
            <person name="Methe B.A."/>
        </authorList>
    </citation>
    <scope>NUCLEOTIDE SEQUENCE [LARGE SCALE GENOMIC DNA]</scope>
    <source>
        <strain>342</strain>
    </source>
</reference>